<protein>
    <recommendedName>
        <fullName evidence="1">D-aminoacyl-tRNA deacylase</fullName>
        <ecNumber evidence="1">3.1.1.96</ecNumber>
    </recommendedName>
    <alternativeName>
        <fullName>D-tyrosyl-tRNA(Tyr) deacylase</fullName>
    </alternativeName>
</protein>
<evidence type="ECO:0000255" key="1">
    <source>
        <dbReference type="HAMAP-Rule" id="MF_00562"/>
    </source>
</evidence>
<organism>
    <name type="scientific">Methanosarcina mazei (strain ATCC BAA-159 / DSM 3647 / Goe1 / Go1 / JCM 11833 / OCM 88)</name>
    <name type="common">Methanosarcina frisia</name>
    <dbReference type="NCBI Taxonomy" id="192952"/>
    <lineage>
        <taxon>Archaea</taxon>
        <taxon>Methanobacteriati</taxon>
        <taxon>Methanobacteriota</taxon>
        <taxon>Stenosarchaea group</taxon>
        <taxon>Methanomicrobia</taxon>
        <taxon>Methanosarcinales</taxon>
        <taxon>Methanosarcinaceae</taxon>
        <taxon>Methanosarcina</taxon>
    </lineage>
</organism>
<accession>Q8PS92</accession>
<sequence>MTDIIPENVNNSKITIICSAPDLASQNIKNHLLNLTEWKNLELPPESRFSAARESIDGKFRLVDIEEIHVFQDGLDRKLEAAGLPASLIIFASKHRSKEEINSLTVHCTGNPSGEARLGGHPKELAVSSPAAMKSILSGMKKLAGEKELKYDVTLEVTHHGPTELSVPSIYAEIGSTEKQWEDPDAGEVAAKSILAVSLEKVPVAVGFGGGHYAMRQTGLLLETKISFGHNFPKYQLEFVDEALVRQAVEKSGAEFAYFDRKSMKSEDRKKISEILEKLGLRVLKESEIRENYGLDD</sequence>
<reference key="1">
    <citation type="journal article" date="2002" name="J. Mol. Microbiol. Biotechnol.">
        <title>The genome of Methanosarcina mazei: evidence for lateral gene transfer between Bacteria and Archaea.</title>
        <authorList>
            <person name="Deppenmeier U."/>
            <person name="Johann A."/>
            <person name="Hartsch T."/>
            <person name="Merkl R."/>
            <person name="Schmitz R.A."/>
            <person name="Martinez-Arias R."/>
            <person name="Henne A."/>
            <person name="Wiezer A."/>
            <person name="Baeumer S."/>
            <person name="Jacobi C."/>
            <person name="Brueggemann H."/>
            <person name="Lienard T."/>
            <person name="Christmann A."/>
            <person name="Boemecke M."/>
            <person name="Steckel S."/>
            <person name="Bhattacharyya A."/>
            <person name="Lykidis A."/>
            <person name="Overbeek R."/>
            <person name="Klenk H.-P."/>
            <person name="Gunsalus R.P."/>
            <person name="Fritz H.-J."/>
            <person name="Gottschalk G."/>
        </authorList>
    </citation>
    <scope>NUCLEOTIDE SEQUENCE [LARGE SCALE GENOMIC DNA]</scope>
    <source>
        <strain>ATCC BAA-159 / DSM 3647 / Goe1 / Go1 / JCM 11833 / OCM 88</strain>
    </source>
</reference>
<comment type="function">
    <text evidence="1">D-aminoacyl-tRNA deacylase with broad substrate specificity. By recycling D-aminoacyl-tRNA to D-amino acids and free tRNA molecules, this enzyme counteracts the toxicity associated with the formation of D-aminoacyl-tRNA entities in vivo.</text>
</comment>
<comment type="catalytic activity">
    <reaction evidence="1">
        <text>a D-aminoacyl-tRNA + H2O = a tRNA + a D-alpha-amino acid + H(+)</text>
        <dbReference type="Rhea" id="RHEA:13953"/>
        <dbReference type="Rhea" id="RHEA-COMP:10123"/>
        <dbReference type="Rhea" id="RHEA-COMP:10124"/>
        <dbReference type="ChEBI" id="CHEBI:15377"/>
        <dbReference type="ChEBI" id="CHEBI:15378"/>
        <dbReference type="ChEBI" id="CHEBI:59871"/>
        <dbReference type="ChEBI" id="CHEBI:78442"/>
        <dbReference type="ChEBI" id="CHEBI:79333"/>
        <dbReference type="EC" id="3.1.1.96"/>
    </reaction>
</comment>
<comment type="catalytic activity">
    <reaction evidence="1">
        <text>glycyl-tRNA(Ala) + H2O = tRNA(Ala) + glycine + H(+)</text>
        <dbReference type="Rhea" id="RHEA:53744"/>
        <dbReference type="Rhea" id="RHEA-COMP:9657"/>
        <dbReference type="Rhea" id="RHEA-COMP:13640"/>
        <dbReference type="ChEBI" id="CHEBI:15377"/>
        <dbReference type="ChEBI" id="CHEBI:15378"/>
        <dbReference type="ChEBI" id="CHEBI:57305"/>
        <dbReference type="ChEBI" id="CHEBI:78442"/>
        <dbReference type="ChEBI" id="CHEBI:78522"/>
        <dbReference type="EC" id="3.1.1.96"/>
    </reaction>
</comment>
<comment type="cofactor">
    <cofactor evidence="1">
        <name>Zn(2+)</name>
        <dbReference type="ChEBI" id="CHEBI:29105"/>
    </cofactor>
    <text evidence="1">Binds 2 Zn(2+) ions per subunit.</text>
</comment>
<comment type="subunit">
    <text evidence="1">Monomer.</text>
</comment>
<comment type="similarity">
    <text evidence="1">Belongs to the DtdA deacylase family.</text>
</comment>
<proteinExistence type="inferred from homology"/>
<gene>
    <name evidence="1" type="primary">dtdA</name>
    <name type="ordered locus">MM_3190</name>
</gene>
<keyword id="KW-0378">Hydrolase</keyword>
<keyword id="KW-0479">Metal-binding</keyword>
<keyword id="KW-0862">Zinc</keyword>
<name>DTDA_METMA</name>
<feature type="chain" id="PRO_0000158968" description="D-aminoacyl-tRNA deacylase">
    <location>
        <begin position="1"/>
        <end position="297"/>
    </location>
</feature>
<dbReference type="EC" id="3.1.1.96" evidence="1"/>
<dbReference type="EMBL" id="AE008384">
    <property type="protein sequence ID" value="AAM32886.1"/>
    <property type="molecule type" value="Genomic_DNA"/>
</dbReference>
<dbReference type="RefSeq" id="WP_011035085.1">
    <property type="nucleotide sequence ID" value="NC_003901.1"/>
</dbReference>
<dbReference type="SMR" id="Q8PS92"/>
<dbReference type="GeneID" id="1481532"/>
<dbReference type="KEGG" id="mma:MM_3190"/>
<dbReference type="PATRIC" id="fig|192952.21.peg.3704"/>
<dbReference type="eggNOG" id="arCOG01616">
    <property type="taxonomic scope" value="Archaea"/>
</dbReference>
<dbReference type="HOGENOM" id="CLU_056464_1_0_2"/>
<dbReference type="Proteomes" id="UP000000595">
    <property type="component" value="Chromosome"/>
</dbReference>
<dbReference type="GO" id="GO:0051499">
    <property type="term" value="F:D-aminoacyl-tRNA deacylase activity"/>
    <property type="evidence" value="ECO:0007669"/>
    <property type="project" value="UniProtKB-UniRule"/>
</dbReference>
<dbReference type="GO" id="GO:0008270">
    <property type="term" value="F:zinc ion binding"/>
    <property type="evidence" value="ECO:0007669"/>
    <property type="project" value="UniProtKB-UniRule"/>
</dbReference>
<dbReference type="GO" id="GO:0019478">
    <property type="term" value="P:D-amino acid catabolic process"/>
    <property type="evidence" value="ECO:0007669"/>
    <property type="project" value="UniProtKB-UniRule"/>
</dbReference>
<dbReference type="FunFam" id="3.40.50.10700:FF:000002">
    <property type="entry name" value="D-aminoacyl-tRNA deacylase"/>
    <property type="match status" value="1"/>
</dbReference>
<dbReference type="Gene3D" id="3.40.50.10700">
    <property type="entry name" value="AF0625-like"/>
    <property type="match status" value="1"/>
</dbReference>
<dbReference type="Gene3D" id="3.40.630.50">
    <property type="entry name" value="AF0625-like"/>
    <property type="match status" value="1"/>
</dbReference>
<dbReference type="HAMAP" id="MF_00562">
    <property type="entry name" value="Deacylase_DtdA"/>
    <property type="match status" value="1"/>
</dbReference>
<dbReference type="InterPro" id="IPR018033">
    <property type="entry name" value="Deacylase_DtdA_archaea"/>
</dbReference>
<dbReference type="InterPro" id="IPR007508">
    <property type="entry name" value="DtdA"/>
</dbReference>
<dbReference type="NCBIfam" id="NF003073">
    <property type="entry name" value="PRK03995.1-5"/>
    <property type="match status" value="1"/>
</dbReference>
<dbReference type="PANTHER" id="PTHR34667">
    <property type="entry name" value="D-AMINOACYL-TRNA DEACYLASE"/>
    <property type="match status" value="1"/>
</dbReference>
<dbReference type="PANTHER" id="PTHR34667:SF1">
    <property type="entry name" value="D-AMINOACYL-TRNA DEACYLASE"/>
    <property type="match status" value="1"/>
</dbReference>
<dbReference type="Pfam" id="PF04414">
    <property type="entry name" value="tRNA_deacylase"/>
    <property type="match status" value="1"/>
</dbReference>
<dbReference type="PIRSF" id="PIRSF016210">
    <property type="entry name" value="UCP016210"/>
    <property type="match status" value="1"/>
</dbReference>
<dbReference type="SUPFAM" id="SSF142535">
    <property type="entry name" value="AF0625-like"/>
    <property type="match status" value="1"/>
</dbReference>